<protein>
    <recommendedName>
        <fullName evidence="3">Asparagine--tRNA ligase, cytoplasmic</fullName>
        <ecNumber evidence="1">6.1.1.22</ecNumber>
    </recommendedName>
    <alternativeName>
        <fullName evidence="1">Asparaginyl-tRNA synthetase</fullName>
        <shortName evidence="1">AsnRS</shortName>
    </alternativeName>
    <alternativeName>
        <fullName evidence="4">Asparaginyl-tRNA synthetase 1</fullName>
    </alternativeName>
</protein>
<name>SYNC_MOUSE</name>
<reference key="1">
    <citation type="journal article" date="2005" name="Science">
        <title>The transcriptional landscape of the mammalian genome.</title>
        <authorList>
            <person name="Carninci P."/>
            <person name="Kasukawa T."/>
            <person name="Katayama S."/>
            <person name="Gough J."/>
            <person name="Frith M.C."/>
            <person name="Maeda N."/>
            <person name="Oyama R."/>
            <person name="Ravasi T."/>
            <person name="Lenhard B."/>
            <person name="Wells C."/>
            <person name="Kodzius R."/>
            <person name="Shimokawa K."/>
            <person name="Bajic V.B."/>
            <person name="Brenner S.E."/>
            <person name="Batalov S."/>
            <person name="Forrest A.R."/>
            <person name="Zavolan M."/>
            <person name="Davis M.J."/>
            <person name="Wilming L.G."/>
            <person name="Aidinis V."/>
            <person name="Allen J.E."/>
            <person name="Ambesi-Impiombato A."/>
            <person name="Apweiler R."/>
            <person name="Aturaliya R.N."/>
            <person name="Bailey T.L."/>
            <person name="Bansal M."/>
            <person name="Baxter L."/>
            <person name="Beisel K.W."/>
            <person name="Bersano T."/>
            <person name="Bono H."/>
            <person name="Chalk A.M."/>
            <person name="Chiu K.P."/>
            <person name="Choudhary V."/>
            <person name="Christoffels A."/>
            <person name="Clutterbuck D.R."/>
            <person name="Crowe M.L."/>
            <person name="Dalla E."/>
            <person name="Dalrymple B.P."/>
            <person name="de Bono B."/>
            <person name="Della Gatta G."/>
            <person name="di Bernardo D."/>
            <person name="Down T."/>
            <person name="Engstrom P."/>
            <person name="Fagiolini M."/>
            <person name="Faulkner G."/>
            <person name="Fletcher C.F."/>
            <person name="Fukushima T."/>
            <person name="Furuno M."/>
            <person name="Futaki S."/>
            <person name="Gariboldi M."/>
            <person name="Georgii-Hemming P."/>
            <person name="Gingeras T.R."/>
            <person name="Gojobori T."/>
            <person name="Green R.E."/>
            <person name="Gustincich S."/>
            <person name="Harbers M."/>
            <person name="Hayashi Y."/>
            <person name="Hensch T.K."/>
            <person name="Hirokawa N."/>
            <person name="Hill D."/>
            <person name="Huminiecki L."/>
            <person name="Iacono M."/>
            <person name="Ikeo K."/>
            <person name="Iwama A."/>
            <person name="Ishikawa T."/>
            <person name="Jakt M."/>
            <person name="Kanapin A."/>
            <person name="Katoh M."/>
            <person name="Kawasawa Y."/>
            <person name="Kelso J."/>
            <person name="Kitamura H."/>
            <person name="Kitano H."/>
            <person name="Kollias G."/>
            <person name="Krishnan S.P."/>
            <person name="Kruger A."/>
            <person name="Kummerfeld S.K."/>
            <person name="Kurochkin I.V."/>
            <person name="Lareau L.F."/>
            <person name="Lazarevic D."/>
            <person name="Lipovich L."/>
            <person name="Liu J."/>
            <person name="Liuni S."/>
            <person name="McWilliam S."/>
            <person name="Madan Babu M."/>
            <person name="Madera M."/>
            <person name="Marchionni L."/>
            <person name="Matsuda H."/>
            <person name="Matsuzawa S."/>
            <person name="Miki H."/>
            <person name="Mignone F."/>
            <person name="Miyake S."/>
            <person name="Morris K."/>
            <person name="Mottagui-Tabar S."/>
            <person name="Mulder N."/>
            <person name="Nakano N."/>
            <person name="Nakauchi H."/>
            <person name="Ng P."/>
            <person name="Nilsson R."/>
            <person name="Nishiguchi S."/>
            <person name="Nishikawa S."/>
            <person name="Nori F."/>
            <person name="Ohara O."/>
            <person name="Okazaki Y."/>
            <person name="Orlando V."/>
            <person name="Pang K.C."/>
            <person name="Pavan W.J."/>
            <person name="Pavesi G."/>
            <person name="Pesole G."/>
            <person name="Petrovsky N."/>
            <person name="Piazza S."/>
            <person name="Reed J."/>
            <person name="Reid J.F."/>
            <person name="Ring B.Z."/>
            <person name="Ringwald M."/>
            <person name="Rost B."/>
            <person name="Ruan Y."/>
            <person name="Salzberg S.L."/>
            <person name="Sandelin A."/>
            <person name="Schneider C."/>
            <person name="Schoenbach C."/>
            <person name="Sekiguchi K."/>
            <person name="Semple C.A."/>
            <person name="Seno S."/>
            <person name="Sessa L."/>
            <person name="Sheng Y."/>
            <person name="Shibata Y."/>
            <person name="Shimada H."/>
            <person name="Shimada K."/>
            <person name="Silva D."/>
            <person name="Sinclair B."/>
            <person name="Sperling S."/>
            <person name="Stupka E."/>
            <person name="Sugiura K."/>
            <person name="Sultana R."/>
            <person name="Takenaka Y."/>
            <person name="Taki K."/>
            <person name="Tammoja K."/>
            <person name="Tan S.L."/>
            <person name="Tang S."/>
            <person name="Taylor M.S."/>
            <person name="Tegner J."/>
            <person name="Teichmann S.A."/>
            <person name="Ueda H.R."/>
            <person name="van Nimwegen E."/>
            <person name="Verardo R."/>
            <person name="Wei C.L."/>
            <person name="Yagi K."/>
            <person name="Yamanishi H."/>
            <person name="Zabarovsky E."/>
            <person name="Zhu S."/>
            <person name="Zimmer A."/>
            <person name="Hide W."/>
            <person name="Bult C."/>
            <person name="Grimmond S.M."/>
            <person name="Teasdale R.D."/>
            <person name="Liu E.T."/>
            <person name="Brusic V."/>
            <person name="Quackenbush J."/>
            <person name="Wahlestedt C."/>
            <person name="Mattick J.S."/>
            <person name="Hume D.A."/>
            <person name="Kai C."/>
            <person name="Sasaki D."/>
            <person name="Tomaru Y."/>
            <person name="Fukuda S."/>
            <person name="Kanamori-Katayama M."/>
            <person name="Suzuki M."/>
            <person name="Aoki J."/>
            <person name="Arakawa T."/>
            <person name="Iida J."/>
            <person name="Imamura K."/>
            <person name="Itoh M."/>
            <person name="Kato T."/>
            <person name="Kawaji H."/>
            <person name="Kawagashira N."/>
            <person name="Kawashima T."/>
            <person name="Kojima M."/>
            <person name="Kondo S."/>
            <person name="Konno H."/>
            <person name="Nakano K."/>
            <person name="Ninomiya N."/>
            <person name="Nishio T."/>
            <person name="Okada M."/>
            <person name="Plessy C."/>
            <person name="Shibata K."/>
            <person name="Shiraki T."/>
            <person name="Suzuki S."/>
            <person name="Tagami M."/>
            <person name="Waki K."/>
            <person name="Watahiki A."/>
            <person name="Okamura-Oho Y."/>
            <person name="Suzuki H."/>
            <person name="Kawai J."/>
            <person name="Hayashizaki Y."/>
        </authorList>
    </citation>
    <scope>NUCLEOTIDE SEQUENCE [LARGE SCALE MRNA]</scope>
    <source>
        <strain>C57BL/6J</strain>
        <strain>NOD</strain>
        <tissue>Embryo</tissue>
        <tissue>Spleen</tissue>
    </source>
</reference>
<reference key="2">
    <citation type="journal article" date="2004" name="Genome Res.">
        <title>The status, quality, and expansion of the NIH full-length cDNA project: the Mammalian Gene Collection (MGC).</title>
        <authorList>
            <consortium name="The MGC Project Team"/>
        </authorList>
    </citation>
    <scope>NUCLEOTIDE SEQUENCE [LARGE SCALE MRNA]</scope>
    <source>
        <strain>C3H/He</strain>
        <tissue>Osteoblast</tissue>
    </source>
</reference>
<reference key="3">
    <citation type="journal article" date="2010" name="Cell">
        <title>A tissue-specific atlas of mouse protein phosphorylation and expression.</title>
        <authorList>
            <person name="Huttlin E.L."/>
            <person name="Jedrychowski M.P."/>
            <person name="Elias J.E."/>
            <person name="Goswami T."/>
            <person name="Rad R."/>
            <person name="Beausoleil S.A."/>
            <person name="Villen J."/>
            <person name="Haas W."/>
            <person name="Sowa M.E."/>
            <person name="Gygi S.P."/>
        </authorList>
    </citation>
    <scope>PHOSPHORYLATION [LARGE SCALE ANALYSIS] AT SER-493</scope>
    <scope>IDENTIFICATION BY MASS SPECTROMETRY [LARGE SCALE ANALYSIS]</scope>
    <source>
        <tissue>Brain</tissue>
        <tissue>Brown adipose tissue</tissue>
        <tissue>Heart</tissue>
        <tissue>Kidney</tissue>
        <tissue>Liver</tissue>
        <tissue>Lung</tissue>
        <tissue>Pancreas</tissue>
        <tissue>Spleen</tissue>
        <tissue>Testis</tissue>
    </source>
</reference>
<reference key="4">
    <citation type="journal article" date="2013" name="Mol. Cell">
        <title>SIRT5-mediated lysine desuccinylation impacts diverse metabolic pathways.</title>
        <authorList>
            <person name="Park J."/>
            <person name="Chen Y."/>
            <person name="Tishkoff D.X."/>
            <person name="Peng C."/>
            <person name="Tan M."/>
            <person name="Dai L."/>
            <person name="Xie Z."/>
            <person name="Zhang Y."/>
            <person name="Zwaans B.M."/>
            <person name="Skinner M.E."/>
            <person name="Lombard D.B."/>
            <person name="Zhao Y."/>
        </authorList>
    </citation>
    <scope>ACETYLATION [LARGE SCALE ANALYSIS] AT LYS-501</scope>
    <scope>IDENTIFICATION BY MASS SPECTROMETRY [LARGE SCALE ANALYSIS]</scope>
    <source>
        <tissue>Embryonic fibroblast</tissue>
    </source>
</reference>
<accession>Q8BP47</accession>
<accession>Q3T9A7</accession>
<accession>Q7TPX0</accession>
<accession>Q9CRY5</accession>
<keyword id="KW-0007">Acetylation</keyword>
<keyword id="KW-0030">Aminoacyl-tRNA synthetase</keyword>
<keyword id="KW-0067">ATP-binding</keyword>
<keyword id="KW-0963">Cytoplasm</keyword>
<keyword id="KW-0436">Ligase</keyword>
<keyword id="KW-0547">Nucleotide-binding</keyword>
<keyword id="KW-0597">Phosphoprotein</keyword>
<keyword id="KW-0648">Protein biosynthesis</keyword>
<keyword id="KW-1185">Reference proteome</keyword>
<evidence type="ECO:0000250" key="1">
    <source>
        <dbReference type="UniProtKB" id="O43776"/>
    </source>
</evidence>
<evidence type="ECO:0000256" key="2">
    <source>
        <dbReference type="SAM" id="MobiDB-lite"/>
    </source>
</evidence>
<evidence type="ECO:0000305" key="3"/>
<evidence type="ECO:0000312" key="4">
    <source>
        <dbReference type="MGI" id="MGI:1917473"/>
    </source>
</evidence>
<evidence type="ECO:0007744" key="5">
    <source>
    </source>
</evidence>
<evidence type="ECO:0007744" key="6">
    <source>
    </source>
</evidence>
<dbReference type="EC" id="6.1.1.22" evidence="1"/>
<dbReference type="EMBL" id="AK013880">
    <property type="protein sequence ID" value="BAB29032.1"/>
    <property type="status" value="ALT_INIT"/>
    <property type="molecule type" value="mRNA"/>
</dbReference>
<dbReference type="EMBL" id="AK077699">
    <property type="protein sequence ID" value="BAC36965.1"/>
    <property type="molecule type" value="mRNA"/>
</dbReference>
<dbReference type="EMBL" id="AK172657">
    <property type="protein sequence ID" value="BAE43117.1"/>
    <property type="molecule type" value="mRNA"/>
</dbReference>
<dbReference type="EMBL" id="BC052849">
    <property type="protein sequence ID" value="AAH52849.1"/>
    <property type="status" value="ALT_INIT"/>
    <property type="molecule type" value="mRNA"/>
</dbReference>
<dbReference type="RefSeq" id="NP_001136422.1">
    <property type="nucleotide sequence ID" value="NM_001142950.1"/>
</dbReference>
<dbReference type="RefSeq" id="NP_081626.2">
    <property type="nucleotide sequence ID" value="NM_027350.3"/>
</dbReference>
<dbReference type="SMR" id="Q8BP47"/>
<dbReference type="BioGRID" id="213922">
    <property type="interactions" value="17"/>
</dbReference>
<dbReference type="FunCoup" id="Q8BP47">
    <property type="interactions" value="4065"/>
</dbReference>
<dbReference type="IntAct" id="Q8BP47">
    <property type="interactions" value="3"/>
</dbReference>
<dbReference type="MINT" id="Q8BP47"/>
<dbReference type="STRING" id="10090.ENSMUSP00000157402"/>
<dbReference type="GlyGen" id="Q8BP47">
    <property type="glycosylation" value="1 site, 1 O-linked glycan (1 site)"/>
</dbReference>
<dbReference type="iPTMnet" id="Q8BP47"/>
<dbReference type="PhosphoSitePlus" id="Q8BP47"/>
<dbReference type="SwissPalm" id="Q8BP47"/>
<dbReference type="jPOST" id="Q8BP47"/>
<dbReference type="PaxDb" id="10090-ENSMUSP00000025483"/>
<dbReference type="PeptideAtlas" id="Q8BP47"/>
<dbReference type="ProteomicsDB" id="263182"/>
<dbReference type="Pumba" id="Q8BP47"/>
<dbReference type="Antibodypedia" id="9706">
    <property type="antibodies" value="200 antibodies from 29 providers"/>
</dbReference>
<dbReference type="DNASU" id="70223"/>
<dbReference type="Ensembl" id="ENSMUST00000237400.2">
    <property type="protein sequence ID" value="ENSMUSP00000157402.2"/>
    <property type="gene ID" value="ENSMUSG00000024587.11"/>
</dbReference>
<dbReference type="GeneID" id="70223"/>
<dbReference type="KEGG" id="mmu:70223"/>
<dbReference type="UCSC" id="uc008fek.2">
    <property type="organism name" value="mouse"/>
</dbReference>
<dbReference type="AGR" id="MGI:1917473"/>
<dbReference type="CTD" id="4677"/>
<dbReference type="MGI" id="MGI:1917473">
    <property type="gene designation" value="Nars1"/>
</dbReference>
<dbReference type="VEuPathDB" id="HostDB:ENSMUSG00000024587"/>
<dbReference type="eggNOG" id="KOG0555">
    <property type="taxonomic scope" value="Eukaryota"/>
</dbReference>
<dbReference type="GeneTree" id="ENSGT01030000234618"/>
<dbReference type="HOGENOM" id="CLU_004553_2_10_1"/>
<dbReference type="InParanoid" id="Q8BP47"/>
<dbReference type="OMA" id="DCCLYPR"/>
<dbReference type="OrthoDB" id="1931232at2759"/>
<dbReference type="PhylomeDB" id="Q8BP47"/>
<dbReference type="TreeFam" id="TF105664"/>
<dbReference type="BioGRID-ORCS" id="70223">
    <property type="hits" value="28 hits in 79 CRISPR screens"/>
</dbReference>
<dbReference type="ChiTaRS" id="Nars">
    <property type="organism name" value="mouse"/>
</dbReference>
<dbReference type="PRO" id="PR:Q8BP47"/>
<dbReference type="Proteomes" id="UP000000589">
    <property type="component" value="Chromosome 18"/>
</dbReference>
<dbReference type="RNAct" id="Q8BP47">
    <property type="molecule type" value="protein"/>
</dbReference>
<dbReference type="Bgee" id="ENSMUSG00000024587">
    <property type="expression patterns" value="Expressed in facial nucleus and 266 other cell types or tissues"/>
</dbReference>
<dbReference type="ExpressionAtlas" id="Q8BP47">
    <property type="expression patterns" value="baseline and differential"/>
</dbReference>
<dbReference type="GO" id="GO:0005829">
    <property type="term" value="C:cytosol"/>
    <property type="evidence" value="ECO:0007669"/>
    <property type="project" value="Ensembl"/>
</dbReference>
<dbReference type="GO" id="GO:0005739">
    <property type="term" value="C:mitochondrion"/>
    <property type="evidence" value="ECO:0007005"/>
    <property type="project" value="MGI"/>
</dbReference>
<dbReference type="GO" id="GO:0004816">
    <property type="term" value="F:asparagine-tRNA ligase activity"/>
    <property type="evidence" value="ECO:0000250"/>
    <property type="project" value="UniProtKB"/>
</dbReference>
<dbReference type="GO" id="GO:0005524">
    <property type="term" value="F:ATP binding"/>
    <property type="evidence" value="ECO:0007669"/>
    <property type="project" value="UniProtKB-KW"/>
</dbReference>
<dbReference type="GO" id="GO:0031728">
    <property type="term" value="F:CCR3 chemokine receptor binding"/>
    <property type="evidence" value="ECO:0000250"/>
    <property type="project" value="UniProtKB"/>
</dbReference>
<dbReference type="GO" id="GO:0003676">
    <property type="term" value="F:nucleic acid binding"/>
    <property type="evidence" value="ECO:0007669"/>
    <property type="project" value="InterPro"/>
</dbReference>
<dbReference type="GO" id="GO:0046983">
    <property type="term" value="F:protein dimerization activity"/>
    <property type="evidence" value="ECO:0000250"/>
    <property type="project" value="UniProtKB"/>
</dbReference>
<dbReference type="GO" id="GO:0006421">
    <property type="term" value="P:asparaginyl-tRNA aminoacylation"/>
    <property type="evidence" value="ECO:0000250"/>
    <property type="project" value="UniProtKB"/>
</dbReference>
<dbReference type="GO" id="GO:0016477">
    <property type="term" value="P:cell migration"/>
    <property type="evidence" value="ECO:0000250"/>
    <property type="project" value="UniProtKB"/>
</dbReference>
<dbReference type="GO" id="GO:0021987">
    <property type="term" value="P:cerebral cortex development"/>
    <property type="evidence" value="ECO:0007669"/>
    <property type="project" value="Ensembl"/>
</dbReference>
<dbReference type="CDD" id="cd04323">
    <property type="entry name" value="AsnRS_cyto_like_N"/>
    <property type="match status" value="1"/>
</dbReference>
<dbReference type="CDD" id="cd00776">
    <property type="entry name" value="AsxRS_core"/>
    <property type="match status" value="1"/>
</dbReference>
<dbReference type="FunFam" id="2.40.50.140:FF:000151">
    <property type="entry name" value="Asparagine--tRNA ligase, cytoplasmic"/>
    <property type="match status" value="1"/>
</dbReference>
<dbReference type="FunFam" id="3.30.930.10:FF:000040">
    <property type="entry name" value="Asparagine--tRNA ligase, cytoplasmic"/>
    <property type="match status" value="1"/>
</dbReference>
<dbReference type="FunFam" id="3.30.1910.20:FF:000001">
    <property type="entry name" value="asparagine--tRNA ligase, cytoplasmic"/>
    <property type="match status" value="1"/>
</dbReference>
<dbReference type="Gene3D" id="3.30.1910.20">
    <property type="entry name" value="asparaginyl-tRNA synthetase, N-terminal domain"/>
    <property type="match status" value="1"/>
</dbReference>
<dbReference type="Gene3D" id="3.30.930.10">
    <property type="entry name" value="Bira Bifunctional Protein, Domain 2"/>
    <property type="match status" value="1"/>
</dbReference>
<dbReference type="Gene3D" id="2.40.50.140">
    <property type="entry name" value="Nucleic acid-binding proteins"/>
    <property type="match status" value="1"/>
</dbReference>
<dbReference type="InterPro" id="IPR004364">
    <property type="entry name" value="Aa-tRNA-synt_II"/>
</dbReference>
<dbReference type="InterPro" id="IPR006195">
    <property type="entry name" value="aa-tRNA-synth_II"/>
</dbReference>
<dbReference type="InterPro" id="IPR045864">
    <property type="entry name" value="aa-tRNA-synth_II/BPL/LPL"/>
</dbReference>
<dbReference type="InterPro" id="IPR004522">
    <property type="entry name" value="Asn-tRNA-ligase"/>
</dbReference>
<dbReference type="InterPro" id="IPR048952">
    <property type="entry name" value="AsnRS_N"/>
</dbReference>
<dbReference type="InterPro" id="IPR002312">
    <property type="entry name" value="Asp/Asn-tRNA-synth_IIb"/>
</dbReference>
<dbReference type="InterPro" id="IPR012340">
    <property type="entry name" value="NA-bd_OB-fold"/>
</dbReference>
<dbReference type="InterPro" id="IPR004365">
    <property type="entry name" value="NA-bd_OB_tRNA"/>
</dbReference>
<dbReference type="NCBIfam" id="TIGR00457">
    <property type="entry name" value="asnS"/>
    <property type="match status" value="1"/>
</dbReference>
<dbReference type="PANTHER" id="PTHR22594:SF16">
    <property type="entry name" value="ASPARAGINE--TRNA LIGASE, CYTOPLASMIC"/>
    <property type="match status" value="1"/>
</dbReference>
<dbReference type="PANTHER" id="PTHR22594">
    <property type="entry name" value="ASPARTYL/LYSYL-TRNA SYNTHETASE"/>
    <property type="match status" value="1"/>
</dbReference>
<dbReference type="Pfam" id="PF20917">
    <property type="entry name" value="AsnRS_N"/>
    <property type="match status" value="1"/>
</dbReference>
<dbReference type="Pfam" id="PF00152">
    <property type="entry name" value="tRNA-synt_2"/>
    <property type="match status" value="1"/>
</dbReference>
<dbReference type="Pfam" id="PF01336">
    <property type="entry name" value="tRNA_anti-codon"/>
    <property type="match status" value="1"/>
</dbReference>
<dbReference type="PRINTS" id="PR01042">
    <property type="entry name" value="TRNASYNTHASP"/>
</dbReference>
<dbReference type="SUPFAM" id="SSF55681">
    <property type="entry name" value="Class II aaRS and biotin synthetases"/>
    <property type="match status" value="1"/>
</dbReference>
<dbReference type="SUPFAM" id="SSF50249">
    <property type="entry name" value="Nucleic acid-binding proteins"/>
    <property type="match status" value="1"/>
</dbReference>
<dbReference type="PROSITE" id="PS50862">
    <property type="entry name" value="AA_TRNA_LIGASE_II"/>
    <property type="match status" value="1"/>
</dbReference>
<gene>
    <name evidence="4" type="primary">Nars1</name>
    <name evidence="4" type="synonym">Nars</name>
</gene>
<organism>
    <name type="scientific">Mus musculus</name>
    <name type="common">Mouse</name>
    <dbReference type="NCBI Taxonomy" id="10090"/>
    <lineage>
        <taxon>Eukaryota</taxon>
        <taxon>Metazoa</taxon>
        <taxon>Chordata</taxon>
        <taxon>Craniata</taxon>
        <taxon>Vertebrata</taxon>
        <taxon>Euteleostomi</taxon>
        <taxon>Mammalia</taxon>
        <taxon>Eutheria</taxon>
        <taxon>Euarchontoglires</taxon>
        <taxon>Glires</taxon>
        <taxon>Rodentia</taxon>
        <taxon>Myomorpha</taxon>
        <taxon>Muroidea</taxon>
        <taxon>Muridae</taxon>
        <taxon>Murinae</taxon>
        <taxon>Mus</taxon>
        <taxon>Mus</taxon>
    </lineage>
</organism>
<proteinExistence type="evidence at protein level"/>
<comment type="function">
    <text evidence="1">Catalyzes the attachment of asparagine to tRNA(Asn) in a two-step reaction: asparagine is first activated by ATP to form Asn-AMP and then transferred to the acceptor end of tRNA(Asn). In addition to its essential role in protein synthesis, acts as a signaling molecule that induced migration of CCR3-expressing cells. Has an essential role in the development of the cerebral cortex, being required for proper proliferation of radial glial cells.</text>
</comment>
<comment type="catalytic activity">
    <reaction evidence="1">
        <text>tRNA(Asn) + L-asparagine + ATP = L-asparaginyl-tRNA(Asn) + AMP + diphosphate + H(+)</text>
        <dbReference type="Rhea" id="RHEA:11180"/>
        <dbReference type="Rhea" id="RHEA-COMP:9659"/>
        <dbReference type="Rhea" id="RHEA-COMP:9674"/>
        <dbReference type="ChEBI" id="CHEBI:15378"/>
        <dbReference type="ChEBI" id="CHEBI:30616"/>
        <dbReference type="ChEBI" id="CHEBI:33019"/>
        <dbReference type="ChEBI" id="CHEBI:58048"/>
        <dbReference type="ChEBI" id="CHEBI:78442"/>
        <dbReference type="ChEBI" id="CHEBI:78515"/>
        <dbReference type="ChEBI" id="CHEBI:456215"/>
        <dbReference type="EC" id="6.1.1.22"/>
    </reaction>
</comment>
<comment type="subunit">
    <text evidence="1">Homodimer.</text>
</comment>
<comment type="subcellular location">
    <subcellularLocation>
        <location evidence="1">Cytoplasm</location>
    </subcellularLocation>
</comment>
<comment type="domain">
    <text evidence="1">The N-terminal domain (1-77) recruits and activates specific immune cells by interacting with CCR3-expressing cells.</text>
</comment>
<comment type="similarity">
    <text evidence="3">Belongs to the class-II aminoacyl-tRNA synthetase family.</text>
</comment>
<comment type="sequence caution" evidence="3">
    <conflict type="erroneous initiation">
        <sequence resource="EMBL-CDS" id="AAH52849"/>
    </conflict>
</comment>
<comment type="sequence caution" evidence="3">
    <conflict type="erroneous initiation">
        <sequence resource="EMBL-CDS" id="BAB29032"/>
    </conflict>
</comment>
<sequence length="559" mass="64279">MSSEVIRGTAEMVLAELYVSDREGNDATGDGTKEKPFKTGLKALMTVGKEPFPTIYVDSQKENERWDVISKSQMKNIKKMWHREQMKNDSREKKEAEDNLRREKNLEEAKKIIIKNDPSLPEPACVKISALEGYRGQRVKVFGWVHRLRRQGKNLMFLVLRDGTGYLQCVLSDDLCQCYNGVVLSTESSVAVYGTLNLTPKGKQAPGGHELSCDFWELVGLAPAGGADNLINEESDVDVQLNNRHMMIRGENMSKILKARSMITRCFRDHFFDRGYCEVTTPTLVQTQVEGGATLFKLDYFGEEAFLTQSSQLYLETCLPALGDVFCIAQSYRAEQSRTRRHLAEFTHVEAECPFLTFEDLLNRLEDLVCDVVDRVLKSPVASIVYELNPNFKPPKRPFRRMNYSDAIEWLKEHDVKKEDGTFYEFGDDIPEAPERLMTDTINEPILLCRFPVEIKSFYMQRCPEDPRLTESVDVLMPNVGEIVGGSMRSWDSEEILEGYKREGIDPAPYYWYTDQRKYGTCPHGGYGLGLERFLSWILNRYHIRDVCLYPRFLQRCRP</sequence>
<feature type="chain" id="PRO_0000176497" description="Asparagine--tRNA ligase, cytoplasmic">
    <location>
        <begin position="1"/>
        <end position="559"/>
    </location>
</feature>
<feature type="region of interest" description="Disordered" evidence="2">
    <location>
        <begin position="82"/>
        <end position="102"/>
    </location>
</feature>
<feature type="modified residue" description="Phosphoserine" evidence="1">
    <location>
        <position position="72"/>
    </location>
</feature>
<feature type="modified residue" description="N6-acetyllysine" evidence="1">
    <location>
        <position position="255"/>
    </location>
</feature>
<feature type="modified residue" description="Phosphoserine" evidence="5">
    <location>
        <position position="493"/>
    </location>
</feature>
<feature type="modified residue" description="N6-acetyllysine" evidence="6">
    <location>
        <position position="501"/>
    </location>
</feature>
<feature type="sequence conflict" description="In Ref. 1; BAB29032." evidence="3" ref="1">
    <location>
        <position position="15"/>
    </location>
</feature>
<feature type="sequence conflict" description="In Ref. 1; BAB29032." evidence="3" ref="1">
    <original>H</original>
    <variation>R</variation>
    <location>
        <position position="82"/>
    </location>
</feature>
<feature type="sequence conflict" description="In Ref. 1; BAB29032." evidence="3" ref="1">
    <original>Q</original>
    <variation>E</variation>
    <location>
        <position position="309"/>
    </location>
</feature>
<feature type="sequence conflict" description="In Ref. 1; BAE43117." evidence="3" ref="1">
    <original>L</original>
    <variation>P</variation>
    <location>
        <position position="469"/>
    </location>
</feature>
<feature type="sequence conflict" description="In Ref. 2; AAH52849." evidence="3" ref="2">
    <original>G</original>
    <variation>E</variation>
    <location>
        <position position="526"/>
    </location>
</feature>